<proteinExistence type="inferred from homology"/>
<evidence type="ECO:0000250" key="1">
    <source>
        <dbReference type="UniProtKB" id="P47148"/>
    </source>
</evidence>
<evidence type="ECO:0000269" key="2">
    <source>
    </source>
</evidence>
<evidence type="ECO:0000305" key="3"/>
<comment type="function">
    <text evidence="1">Probably involved in peroxisome formation or maintenance as well as in amino acid metabolism.</text>
</comment>
<comment type="subcellular location">
    <subcellularLocation>
        <location evidence="1">Peroxisome matrix</location>
    </subcellularLocation>
    <subcellularLocation>
        <location evidence="2">Cytoplasm</location>
        <location evidence="2">Cytosol</location>
    </subcellularLocation>
    <subcellularLocation>
        <location evidence="2">Nucleus</location>
    </subcellularLocation>
</comment>
<comment type="domain">
    <text evidence="1">Peroxisomal targeting signal 1 (PTS1) is a tripeptide located at the C-terminus of more than 95% of all peroxisomal matrix proteins. The prototypical PTS1 is the terminal tripeptide SKL (serine-lysine-leucine) but the consensus of PTS1 is defined as [S/A/H/C/E/P/Q/V] [K/R/H/Q] [L/F]. However, this description of the PTS1 consensus must probably be expanded beyond the terminal tripeptide.</text>
</comment>
<comment type="similarity">
    <text evidence="3">Belongs to the PXP2 family.</text>
</comment>
<gene>
    <name type="ORF">SPBC17D11.03c</name>
</gene>
<reference key="1">
    <citation type="journal article" date="2002" name="Nature">
        <title>The genome sequence of Schizosaccharomyces pombe.</title>
        <authorList>
            <person name="Wood V."/>
            <person name="Gwilliam R."/>
            <person name="Rajandream M.A."/>
            <person name="Lyne M.H."/>
            <person name="Lyne R."/>
            <person name="Stewart A."/>
            <person name="Sgouros J.G."/>
            <person name="Peat N."/>
            <person name="Hayles J."/>
            <person name="Baker S.G."/>
            <person name="Basham D."/>
            <person name="Bowman S."/>
            <person name="Brooks K."/>
            <person name="Brown D."/>
            <person name="Brown S."/>
            <person name="Chillingworth T."/>
            <person name="Churcher C.M."/>
            <person name="Collins M."/>
            <person name="Connor R."/>
            <person name="Cronin A."/>
            <person name="Davis P."/>
            <person name="Feltwell T."/>
            <person name="Fraser A."/>
            <person name="Gentles S."/>
            <person name="Goble A."/>
            <person name="Hamlin N."/>
            <person name="Harris D.E."/>
            <person name="Hidalgo J."/>
            <person name="Hodgson G."/>
            <person name="Holroyd S."/>
            <person name="Hornsby T."/>
            <person name="Howarth S."/>
            <person name="Huckle E.J."/>
            <person name="Hunt S."/>
            <person name="Jagels K."/>
            <person name="James K.D."/>
            <person name="Jones L."/>
            <person name="Jones M."/>
            <person name="Leather S."/>
            <person name="McDonald S."/>
            <person name="McLean J."/>
            <person name="Mooney P."/>
            <person name="Moule S."/>
            <person name="Mungall K.L."/>
            <person name="Murphy L.D."/>
            <person name="Niblett D."/>
            <person name="Odell C."/>
            <person name="Oliver K."/>
            <person name="O'Neil S."/>
            <person name="Pearson D."/>
            <person name="Quail M.A."/>
            <person name="Rabbinowitsch E."/>
            <person name="Rutherford K.M."/>
            <person name="Rutter S."/>
            <person name="Saunders D."/>
            <person name="Seeger K."/>
            <person name="Sharp S."/>
            <person name="Skelton J."/>
            <person name="Simmonds M.N."/>
            <person name="Squares R."/>
            <person name="Squares S."/>
            <person name="Stevens K."/>
            <person name="Taylor K."/>
            <person name="Taylor R.G."/>
            <person name="Tivey A."/>
            <person name="Walsh S.V."/>
            <person name="Warren T."/>
            <person name="Whitehead S."/>
            <person name="Woodward J.R."/>
            <person name="Volckaert G."/>
            <person name="Aert R."/>
            <person name="Robben J."/>
            <person name="Grymonprez B."/>
            <person name="Weltjens I."/>
            <person name="Vanstreels E."/>
            <person name="Rieger M."/>
            <person name="Schaefer M."/>
            <person name="Mueller-Auer S."/>
            <person name="Gabel C."/>
            <person name="Fuchs M."/>
            <person name="Duesterhoeft A."/>
            <person name="Fritzc C."/>
            <person name="Holzer E."/>
            <person name="Moestl D."/>
            <person name="Hilbert H."/>
            <person name="Borzym K."/>
            <person name="Langer I."/>
            <person name="Beck A."/>
            <person name="Lehrach H."/>
            <person name="Reinhardt R."/>
            <person name="Pohl T.M."/>
            <person name="Eger P."/>
            <person name="Zimmermann W."/>
            <person name="Wedler H."/>
            <person name="Wambutt R."/>
            <person name="Purnelle B."/>
            <person name="Goffeau A."/>
            <person name="Cadieu E."/>
            <person name="Dreano S."/>
            <person name="Gloux S."/>
            <person name="Lelaure V."/>
            <person name="Mottier S."/>
            <person name="Galibert F."/>
            <person name="Aves S.J."/>
            <person name="Xiang Z."/>
            <person name="Hunt C."/>
            <person name="Moore K."/>
            <person name="Hurst S.M."/>
            <person name="Lucas M."/>
            <person name="Rochet M."/>
            <person name="Gaillardin C."/>
            <person name="Tallada V.A."/>
            <person name="Garzon A."/>
            <person name="Thode G."/>
            <person name="Daga R.R."/>
            <person name="Cruzado L."/>
            <person name="Jimenez J."/>
            <person name="Sanchez M."/>
            <person name="del Rey F."/>
            <person name="Benito J."/>
            <person name="Dominguez A."/>
            <person name="Revuelta J.L."/>
            <person name="Moreno S."/>
            <person name="Armstrong J."/>
            <person name="Forsburg S.L."/>
            <person name="Cerutti L."/>
            <person name="Lowe T."/>
            <person name="McCombie W.R."/>
            <person name="Paulsen I."/>
            <person name="Potashkin J."/>
            <person name="Shpakovski G.V."/>
            <person name="Ussery D."/>
            <person name="Barrell B.G."/>
            <person name="Nurse P."/>
        </authorList>
    </citation>
    <scope>NUCLEOTIDE SEQUENCE [LARGE SCALE GENOMIC DNA]</scope>
    <source>
        <strain>972 / ATCC 24843</strain>
    </source>
</reference>
<reference key="2">
    <citation type="journal article" date="2006" name="Nat. Biotechnol.">
        <title>ORFeome cloning and global analysis of protein localization in the fission yeast Schizosaccharomyces pombe.</title>
        <authorList>
            <person name="Matsuyama A."/>
            <person name="Arai R."/>
            <person name="Yashiroda Y."/>
            <person name="Shirai A."/>
            <person name="Kamata A."/>
            <person name="Sekido S."/>
            <person name="Kobayashi Y."/>
            <person name="Hashimoto A."/>
            <person name="Hamamoto M."/>
            <person name="Hiraoka Y."/>
            <person name="Horinouchi S."/>
            <person name="Yoshida M."/>
        </authorList>
    </citation>
    <scope>SUBCELLULAR LOCATION [LARGE SCALE ANALYSIS]</scope>
</reference>
<accession>O74758</accession>
<dbReference type="EMBL" id="CU329671">
    <property type="protein sequence ID" value="CAA21074.1"/>
    <property type="molecule type" value="Genomic_DNA"/>
</dbReference>
<dbReference type="PIR" id="T39714">
    <property type="entry name" value="T39714"/>
</dbReference>
<dbReference type="SMR" id="O74758"/>
<dbReference type="BioGRID" id="276191">
    <property type="interactions" value="5"/>
</dbReference>
<dbReference type="iPTMnet" id="O74758"/>
<dbReference type="PaxDb" id="4896-SPBC17D11.03c.1"/>
<dbReference type="EnsemblFungi" id="SPBC17D11.03c.1">
    <property type="protein sequence ID" value="SPBC17D11.03c.1:pep"/>
    <property type="gene ID" value="SPBC17D11.03c"/>
</dbReference>
<dbReference type="KEGG" id="spo:2539635"/>
<dbReference type="PomBase" id="SPBC17D11.03c"/>
<dbReference type="VEuPathDB" id="FungiDB:SPBC17D11.03c"/>
<dbReference type="eggNOG" id="ENOG502RCP9">
    <property type="taxonomic scope" value="Eukaryota"/>
</dbReference>
<dbReference type="HOGENOM" id="CLU_065389_3_1_1"/>
<dbReference type="InParanoid" id="O74758"/>
<dbReference type="OMA" id="RNTWYFI"/>
<dbReference type="PhylomeDB" id="O74758"/>
<dbReference type="PRO" id="PR:O74758"/>
<dbReference type="Proteomes" id="UP000002485">
    <property type="component" value="Chromosome II"/>
</dbReference>
<dbReference type="GO" id="GO:0005829">
    <property type="term" value="C:cytosol"/>
    <property type="evidence" value="ECO:0007005"/>
    <property type="project" value="PomBase"/>
</dbReference>
<dbReference type="GO" id="GO:0005739">
    <property type="term" value="C:mitochondrion"/>
    <property type="evidence" value="ECO:0000250"/>
    <property type="project" value="PomBase"/>
</dbReference>
<dbReference type="GO" id="GO:0005634">
    <property type="term" value="C:nucleus"/>
    <property type="evidence" value="ECO:0007005"/>
    <property type="project" value="PomBase"/>
</dbReference>
<dbReference type="GO" id="GO:0005782">
    <property type="term" value="C:peroxisomal matrix"/>
    <property type="evidence" value="ECO:0007669"/>
    <property type="project" value="UniProtKB-SubCell"/>
</dbReference>
<dbReference type="GO" id="GO:0051920">
    <property type="term" value="F:peroxiredoxin activity"/>
    <property type="evidence" value="ECO:0007669"/>
    <property type="project" value="InterPro"/>
</dbReference>
<dbReference type="GO" id="GO:0098869">
    <property type="term" value="P:cellular oxidant detoxification"/>
    <property type="evidence" value="ECO:0000255"/>
    <property type="project" value="PomBase"/>
</dbReference>
<dbReference type="Gene3D" id="1.20.1290.10">
    <property type="entry name" value="AhpD-like"/>
    <property type="match status" value="1"/>
</dbReference>
<dbReference type="InterPro" id="IPR029032">
    <property type="entry name" value="AhpD-like"/>
</dbReference>
<dbReference type="InterPro" id="IPR003779">
    <property type="entry name" value="CMD-like"/>
</dbReference>
<dbReference type="InterPro" id="IPR052999">
    <property type="entry name" value="PTS1_Protein"/>
</dbReference>
<dbReference type="PANTHER" id="PTHR28180">
    <property type="entry name" value="CONSERVED MITOCHONDRIAL PROTEIN-RELATED"/>
    <property type="match status" value="1"/>
</dbReference>
<dbReference type="PANTHER" id="PTHR28180:SF2">
    <property type="entry name" value="PEROXISOMAL PROTEIN 2"/>
    <property type="match status" value="1"/>
</dbReference>
<dbReference type="Pfam" id="PF02627">
    <property type="entry name" value="CMD"/>
    <property type="match status" value="1"/>
</dbReference>
<dbReference type="SUPFAM" id="SSF69118">
    <property type="entry name" value="AhpD-like"/>
    <property type="match status" value="1"/>
</dbReference>
<protein>
    <recommendedName>
        <fullName>Peroxisomal protein 2</fullName>
    </recommendedName>
</protein>
<name>PXP2_SCHPO</name>
<keyword id="KW-0963">Cytoplasm</keyword>
<keyword id="KW-0539">Nucleus</keyword>
<keyword id="KW-0576">Peroxisome</keyword>
<keyword id="KW-1185">Reference proteome</keyword>
<organism>
    <name type="scientific">Schizosaccharomyces pombe (strain 972 / ATCC 24843)</name>
    <name type="common">Fission yeast</name>
    <dbReference type="NCBI Taxonomy" id="284812"/>
    <lineage>
        <taxon>Eukaryota</taxon>
        <taxon>Fungi</taxon>
        <taxon>Dikarya</taxon>
        <taxon>Ascomycota</taxon>
        <taxon>Taphrinomycotina</taxon>
        <taxon>Schizosaccharomycetes</taxon>
        <taxon>Schizosaccharomycetales</taxon>
        <taxon>Schizosaccharomycetaceae</taxon>
        <taxon>Schizosaccharomyces</taxon>
    </lineage>
</organism>
<feature type="chain" id="PRO_0000317091" description="Peroxisomal protein 2">
    <location>
        <begin position="1"/>
        <end position="213"/>
    </location>
</feature>
<feature type="short sequence motif" description="Peroxisomal target signal 1 (PTS1)" evidence="1">
    <location>
        <begin position="211"/>
        <end position="213"/>
    </location>
</feature>
<sequence length="213" mass="23489">MTHNTMLQRFNGLLEPTHLYIVSVVAYSACNRPDKISGIAKEAMEHVGPSIYPKLREALVKSSPLVGFPRTINSLREMTTNIPPPFPDEFARAADADIDTGKRGKIYFEKTYGKVTQRVLRSMQSSSLDLANIALDYAYGKVLSFNEVVSPLETSLMIIAALVPQDVNPQLRGHLKGALNHGATKEQVMSARNIALEISKECGIQFKGDIETL</sequence>